<accession>A0R2D5</accession>
<accession>I7GDH0</accession>
<name>Y5073_MYCS2</name>
<sequence length="210" mass="21703">MASSAEAIVTHAERSISEDAIVAAARERADDIGAGAVTPAVGALLSVLARLTGGRAVVEVGTGAGVSGLWLLSGMRDDGVLTTIDVEPEHQRIAKQGFSEAGVGPGRTRLISGRAQEVLTRLADESYDLVFIDADPVDQPQFVVEGVRLLRSGGAIVVHRAALGGRAGDADARDAEVTAVREAARLIAEDERLTPVLIPLGDGLLAAVRD</sequence>
<keyword id="KW-0489">Methyltransferase</keyword>
<keyword id="KW-1185">Reference proteome</keyword>
<keyword id="KW-0949">S-adenosyl-L-methionine</keyword>
<keyword id="KW-0808">Transferase</keyword>
<reference key="1">
    <citation type="submission" date="2006-10" db="EMBL/GenBank/DDBJ databases">
        <authorList>
            <person name="Fleischmann R.D."/>
            <person name="Dodson R.J."/>
            <person name="Haft D.H."/>
            <person name="Merkel J.S."/>
            <person name="Nelson W.C."/>
            <person name="Fraser C.M."/>
        </authorList>
    </citation>
    <scope>NUCLEOTIDE SEQUENCE [LARGE SCALE GENOMIC DNA]</scope>
    <source>
        <strain>ATCC 700084 / mc(2)155</strain>
    </source>
</reference>
<reference key="2">
    <citation type="journal article" date="2007" name="Genome Biol.">
        <title>Interrupted coding sequences in Mycobacterium smegmatis: authentic mutations or sequencing errors?</title>
        <authorList>
            <person name="Deshayes C."/>
            <person name="Perrodou E."/>
            <person name="Gallien S."/>
            <person name="Euphrasie D."/>
            <person name="Schaeffer C."/>
            <person name="Van-Dorsselaer A."/>
            <person name="Poch O."/>
            <person name="Lecompte O."/>
            <person name="Reyrat J.-M."/>
        </authorList>
    </citation>
    <scope>NUCLEOTIDE SEQUENCE [LARGE SCALE GENOMIC DNA]</scope>
    <source>
        <strain>ATCC 700084 / mc(2)155</strain>
    </source>
</reference>
<reference key="3">
    <citation type="journal article" date="2009" name="Genome Res.">
        <title>Ortho-proteogenomics: multiple proteomes investigation through orthology and a new MS-based protocol.</title>
        <authorList>
            <person name="Gallien S."/>
            <person name="Perrodou E."/>
            <person name="Carapito C."/>
            <person name="Deshayes C."/>
            <person name="Reyrat J.-M."/>
            <person name="Van Dorsselaer A."/>
            <person name="Poch O."/>
            <person name="Schaeffer C."/>
            <person name="Lecompte O."/>
        </authorList>
    </citation>
    <scope>NUCLEOTIDE SEQUENCE [LARGE SCALE GENOMIC DNA]</scope>
    <scope>IDENTIFICATION BY MASS SPECTROMETRY [LARGE SCALE ANALYSIS]</scope>
    <scope>CLEAVAGE OF INITIATOR METHIONINE</scope>
    <source>
        <strain>ATCC 700084 / mc(2)155</strain>
    </source>
</reference>
<dbReference type="EC" id="2.1.1.-"/>
<dbReference type="EMBL" id="CP000480">
    <property type="protein sequence ID" value="ABK70516.1"/>
    <property type="molecule type" value="Genomic_DNA"/>
</dbReference>
<dbReference type="EMBL" id="CP001663">
    <property type="protein sequence ID" value="AFP41391.1"/>
    <property type="molecule type" value="Genomic_DNA"/>
</dbReference>
<dbReference type="RefSeq" id="WP_003896481.1">
    <property type="nucleotide sequence ID" value="NZ_SIJM01000019.1"/>
</dbReference>
<dbReference type="RefSeq" id="YP_889323.1">
    <property type="nucleotide sequence ID" value="NC_008596.1"/>
</dbReference>
<dbReference type="SMR" id="A0R2D5"/>
<dbReference type="STRING" id="246196.MSMEG_5073"/>
<dbReference type="PaxDb" id="246196-MSMEI_4947"/>
<dbReference type="KEGG" id="msb:LJ00_25090"/>
<dbReference type="KEGG" id="msg:MSMEI_4947"/>
<dbReference type="KEGG" id="msm:MSMEG_5073"/>
<dbReference type="PATRIC" id="fig|246196.19.peg.4951"/>
<dbReference type="eggNOG" id="COG4122">
    <property type="taxonomic scope" value="Bacteria"/>
</dbReference>
<dbReference type="OrthoDB" id="4774874at2"/>
<dbReference type="Proteomes" id="UP000000757">
    <property type="component" value="Chromosome"/>
</dbReference>
<dbReference type="Proteomes" id="UP000006158">
    <property type="component" value="Chromosome"/>
</dbReference>
<dbReference type="GO" id="GO:0008171">
    <property type="term" value="F:O-methyltransferase activity"/>
    <property type="evidence" value="ECO:0007669"/>
    <property type="project" value="InterPro"/>
</dbReference>
<dbReference type="GO" id="GO:0008757">
    <property type="term" value="F:S-adenosylmethionine-dependent methyltransferase activity"/>
    <property type="evidence" value="ECO:0007669"/>
    <property type="project" value="TreeGrafter"/>
</dbReference>
<dbReference type="GO" id="GO:0032259">
    <property type="term" value="P:methylation"/>
    <property type="evidence" value="ECO:0007669"/>
    <property type="project" value="UniProtKB-KW"/>
</dbReference>
<dbReference type="CDD" id="cd02440">
    <property type="entry name" value="AdoMet_MTases"/>
    <property type="match status" value="1"/>
</dbReference>
<dbReference type="Gene3D" id="3.40.50.150">
    <property type="entry name" value="Vaccinia Virus protein VP39"/>
    <property type="match status" value="1"/>
</dbReference>
<dbReference type="InterPro" id="IPR050362">
    <property type="entry name" value="Cation-dep_OMT"/>
</dbReference>
<dbReference type="InterPro" id="IPR029063">
    <property type="entry name" value="SAM-dependent_MTases_sf"/>
</dbReference>
<dbReference type="InterPro" id="IPR002935">
    <property type="entry name" value="SAM_O-MeTrfase"/>
</dbReference>
<dbReference type="PANTHER" id="PTHR10509:SF85">
    <property type="entry name" value="O-METHYLTRANSFERASE RV1220C-RELATED"/>
    <property type="match status" value="1"/>
</dbReference>
<dbReference type="PANTHER" id="PTHR10509">
    <property type="entry name" value="O-METHYLTRANSFERASE-RELATED"/>
    <property type="match status" value="1"/>
</dbReference>
<dbReference type="Pfam" id="PF01596">
    <property type="entry name" value="Methyltransf_3"/>
    <property type="match status" value="1"/>
</dbReference>
<dbReference type="SUPFAM" id="SSF53335">
    <property type="entry name" value="S-adenosyl-L-methionine-dependent methyltransferases"/>
    <property type="match status" value="1"/>
</dbReference>
<dbReference type="PROSITE" id="PS51682">
    <property type="entry name" value="SAM_OMT_I"/>
    <property type="match status" value="1"/>
</dbReference>
<proteinExistence type="evidence at protein level"/>
<gene>
    <name type="ordered locus">MSMEG_5073</name>
    <name type="ordered locus">MSMEI_4947</name>
</gene>
<organism>
    <name type="scientific">Mycolicibacterium smegmatis (strain ATCC 700084 / mc(2)155)</name>
    <name type="common">Mycobacterium smegmatis</name>
    <dbReference type="NCBI Taxonomy" id="246196"/>
    <lineage>
        <taxon>Bacteria</taxon>
        <taxon>Bacillati</taxon>
        <taxon>Actinomycetota</taxon>
        <taxon>Actinomycetes</taxon>
        <taxon>Mycobacteriales</taxon>
        <taxon>Mycobacteriaceae</taxon>
        <taxon>Mycolicibacterium</taxon>
    </lineage>
</organism>
<comment type="similarity">
    <text evidence="2">Belongs to the class I-like SAM-binding methyltransferase superfamily. Cation-dependent O-methyltransferase family.</text>
</comment>
<feature type="initiator methionine" description="Removed" evidence="3">
    <location>
        <position position="1"/>
    </location>
</feature>
<feature type="chain" id="PRO_0000380100" description="Putative O-methyltransferase MSMEG_5073/MSMEI_4947">
    <location>
        <begin position="2"/>
        <end position="210"/>
    </location>
</feature>
<feature type="binding site" evidence="2">
    <location>
        <position position="37"/>
    </location>
    <ligand>
        <name>S-adenosyl-L-methionine</name>
        <dbReference type="ChEBI" id="CHEBI:59789"/>
    </ligand>
</feature>
<feature type="binding site" evidence="2">
    <location>
        <position position="59"/>
    </location>
    <ligand>
        <name>S-adenosyl-L-methionine</name>
        <dbReference type="ChEBI" id="CHEBI:59789"/>
    </ligand>
</feature>
<feature type="binding site" evidence="2">
    <location>
        <begin position="61"/>
        <end position="62"/>
    </location>
    <ligand>
        <name>S-adenosyl-L-methionine</name>
        <dbReference type="ChEBI" id="CHEBI:59789"/>
    </ligand>
</feature>
<feature type="binding site" evidence="2">
    <location>
        <position position="67"/>
    </location>
    <ligand>
        <name>S-adenosyl-L-methionine</name>
        <dbReference type="ChEBI" id="CHEBI:59789"/>
    </ligand>
</feature>
<feature type="binding site" evidence="2">
    <location>
        <position position="85"/>
    </location>
    <ligand>
        <name>S-adenosyl-L-methionine</name>
        <dbReference type="ChEBI" id="CHEBI:59789"/>
    </ligand>
</feature>
<feature type="binding site" evidence="2">
    <location>
        <position position="86"/>
    </location>
    <ligand>
        <name>S-adenosyl-L-methionine</name>
        <dbReference type="ChEBI" id="CHEBI:59789"/>
    </ligand>
</feature>
<feature type="binding site" evidence="1">
    <location>
        <position position="133"/>
    </location>
    <ligand>
        <name>substrate</name>
    </ligand>
</feature>
<feature type="binding site" evidence="2">
    <location>
        <position position="135"/>
    </location>
    <ligand>
        <name>S-adenosyl-L-methionine</name>
        <dbReference type="ChEBI" id="CHEBI:59789"/>
    </ligand>
</feature>
<evidence type="ECO:0000250" key="1"/>
<evidence type="ECO:0000255" key="2">
    <source>
        <dbReference type="PROSITE-ProRule" id="PRU01019"/>
    </source>
</evidence>
<evidence type="ECO:0000269" key="3">
    <source>
    </source>
</evidence>
<protein>
    <recommendedName>
        <fullName>Putative O-methyltransferase MSMEG_5073/MSMEI_4947</fullName>
        <ecNumber>2.1.1.-</ecNumber>
    </recommendedName>
</protein>